<evidence type="ECO:0000250" key="1"/>
<evidence type="ECO:0000250" key="2">
    <source>
        <dbReference type="UniProtKB" id="Q9NNX6"/>
    </source>
</evidence>
<evidence type="ECO:0000255" key="3"/>
<evidence type="ECO:0000255" key="4">
    <source>
        <dbReference type="PROSITE-ProRule" id="PRU00040"/>
    </source>
</evidence>
<protein>
    <recommendedName>
        <fullName>CD209 antigen</fullName>
    </recommendedName>
    <alternativeName>
        <fullName>Dendritic cell-specific ICAM-3-grabbing non-integrin 1</fullName>
        <shortName>DC-SIGN1</shortName>
    </alternativeName>
    <cdAntigenName>CD209</cdAntigenName>
</protein>
<keyword id="KW-1064">Adaptive immunity</keyword>
<keyword id="KW-0106">Calcium</keyword>
<keyword id="KW-0130">Cell adhesion</keyword>
<keyword id="KW-1015">Disulfide bond</keyword>
<keyword id="KW-0254">Endocytosis</keyword>
<keyword id="KW-0325">Glycoprotein</keyword>
<keyword id="KW-0391">Immunity</keyword>
<keyword id="KW-0399">Innate immunity</keyword>
<keyword id="KW-0430">Lectin</keyword>
<keyword id="KW-0465">Mannose-binding</keyword>
<keyword id="KW-0472">Membrane</keyword>
<keyword id="KW-0479">Metal-binding</keyword>
<keyword id="KW-0675">Receptor</keyword>
<keyword id="KW-1185">Reference proteome</keyword>
<keyword id="KW-0677">Repeat</keyword>
<keyword id="KW-0735">Signal-anchor</keyword>
<keyword id="KW-0812">Transmembrane</keyword>
<keyword id="KW-1133">Transmembrane helix</keyword>
<dbReference type="EMBL" id="AY078912">
    <property type="protein sequence ID" value="AAL89543.1"/>
    <property type="molecule type" value="Genomic_DNA"/>
</dbReference>
<dbReference type="EMBL" id="AY078906">
    <property type="protein sequence ID" value="AAL89543.1"/>
    <property type="status" value="JOINED"/>
    <property type="molecule type" value="Genomic_DNA"/>
</dbReference>
<dbReference type="EMBL" id="AY078907">
    <property type="protein sequence ID" value="AAL89543.1"/>
    <property type="status" value="JOINED"/>
    <property type="molecule type" value="Genomic_DNA"/>
</dbReference>
<dbReference type="EMBL" id="AY078908">
    <property type="protein sequence ID" value="AAL89543.1"/>
    <property type="status" value="JOINED"/>
    <property type="molecule type" value="Genomic_DNA"/>
</dbReference>
<dbReference type="EMBL" id="AY078909">
    <property type="protein sequence ID" value="AAL89543.1"/>
    <property type="status" value="JOINED"/>
    <property type="molecule type" value="Genomic_DNA"/>
</dbReference>
<dbReference type="EMBL" id="AY078910">
    <property type="protein sequence ID" value="AAL89543.1"/>
    <property type="status" value="JOINED"/>
    <property type="molecule type" value="Genomic_DNA"/>
</dbReference>
<dbReference type="EMBL" id="AY078911">
    <property type="protein sequence ID" value="AAL89543.1"/>
    <property type="status" value="JOINED"/>
    <property type="molecule type" value="Genomic_DNA"/>
</dbReference>
<dbReference type="SMR" id="Q8HXZ8"/>
<dbReference type="FunCoup" id="Q8HXZ8">
    <property type="interactions" value="258"/>
</dbReference>
<dbReference type="STRING" id="9593.ENSGGOP00000031836"/>
<dbReference type="GlyCosmos" id="Q8HXZ8">
    <property type="glycosylation" value="1 site, No reported glycans"/>
</dbReference>
<dbReference type="eggNOG" id="KOG4297">
    <property type="taxonomic scope" value="Eukaryota"/>
</dbReference>
<dbReference type="InParanoid" id="Q8HXZ8"/>
<dbReference type="Proteomes" id="UP000001519">
    <property type="component" value="Unplaced"/>
</dbReference>
<dbReference type="GO" id="GO:0009897">
    <property type="term" value="C:external side of plasma membrane"/>
    <property type="evidence" value="ECO:0000318"/>
    <property type="project" value="GO_Central"/>
</dbReference>
<dbReference type="GO" id="GO:0005537">
    <property type="term" value="F:D-mannose binding"/>
    <property type="evidence" value="ECO:0000318"/>
    <property type="project" value="GO_Central"/>
</dbReference>
<dbReference type="GO" id="GO:0046872">
    <property type="term" value="F:metal ion binding"/>
    <property type="evidence" value="ECO:0007669"/>
    <property type="project" value="UniProtKB-KW"/>
</dbReference>
<dbReference type="GO" id="GO:0038187">
    <property type="term" value="F:pattern recognition receptor activity"/>
    <property type="evidence" value="ECO:0000318"/>
    <property type="project" value="GO_Central"/>
</dbReference>
<dbReference type="GO" id="GO:0002250">
    <property type="term" value="P:adaptive immune response"/>
    <property type="evidence" value="ECO:0007669"/>
    <property type="project" value="UniProtKB-KW"/>
</dbReference>
<dbReference type="GO" id="GO:0007155">
    <property type="term" value="P:cell adhesion"/>
    <property type="evidence" value="ECO:0007669"/>
    <property type="project" value="UniProtKB-KW"/>
</dbReference>
<dbReference type="GO" id="GO:0006897">
    <property type="term" value="P:endocytosis"/>
    <property type="evidence" value="ECO:0007669"/>
    <property type="project" value="UniProtKB-KW"/>
</dbReference>
<dbReference type="GO" id="GO:0006955">
    <property type="term" value="P:immune response"/>
    <property type="evidence" value="ECO:0000318"/>
    <property type="project" value="GO_Central"/>
</dbReference>
<dbReference type="GO" id="GO:0045087">
    <property type="term" value="P:innate immune response"/>
    <property type="evidence" value="ECO:0007669"/>
    <property type="project" value="UniProtKB-KW"/>
</dbReference>
<dbReference type="CDD" id="cd03590">
    <property type="entry name" value="CLECT_DC-SIGN_like"/>
    <property type="match status" value="1"/>
</dbReference>
<dbReference type="FunFam" id="3.10.100.10:FF:000044">
    <property type="entry name" value="CD209 antigen, isoform CRA_b"/>
    <property type="match status" value="1"/>
</dbReference>
<dbReference type="Gene3D" id="3.10.100.10">
    <property type="entry name" value="Mannose-Binding Protein A, subunit A"/>
    <property type="match status" value="1"/>
</dbReference>
<dbReference type="InterPro" id="IPR001304">
    <property type="entry name" value="C-type_lectin-like"/>
</dbReference>
<dbReference type="InterPro" id="IPR016186">
    <property type="entry name" value="C-type_lectin-like/link_sf"/>
</dbReference>
<dbReference type="InterPro" id="IPR050111">
    <property type="entry name" value="C-type_lectin/snaclec_domain"/>
</dbReference>
<dbReference type="InterPro" id="IPR018378">
    <property type="entry name" value="C-type_lectin_CS"/>
</dbReference>
<dbReference type="InterPro" id="IPR033989">
    <property type="entry name" value="CD209-like_CTLD"/>
</dbReference>
<dbReference type="InterPro" id="IPR016187">
    <property type="entry name" value="CTDL_fold"/>
</dbReference>
<dbReference type="PANTHER" id="PTHR22803">
    <property type="entry name" value="MANNOSE, PHOSPHOLIPASE, LECTIN RECEPTOR RELATED"/>
    <property type="match status" value="1"/>
</dbReference>
<dbReference type="Pfam" id="PF00059">
    <property type="entry name" value="Lectin_C"/>
    <property type="match status" value="1"/>
</dbReference>
<dbReference type="SMART" id="SM00034">
    <property type="entry name" value="CLECT"/>
    <property type="match status" value="1"/>
</dbReference>
<dbReference type="SUPFAM" id="SSF56436">
    <property type="entry name" value="C-type lectin-like"/>
    <property type="match status" value="1"/>
</dbReference>
<dbReference type="PROSITE" id="PS00615">
    <property type="entry name" value="C_TYPE_LECTIN_1"/>
    <property type="match status" value="1"/>
</dbReference>
<dbReference type="PROSITE" id="PS50041">
    <property type="entry name" value="C_TYPE_LECTIN_2"/>
    <property type="match status" value="1"/>
</dbReference>
<name>CD209_GORGO</name>
<sequence length="427" mass="48400">MSDSKEPRLQQLGLLEEEQLRGLGFRQTRGYKSLAGCLGHGPLVLQLLSFTLLAALLVQVSKVPSSISQEQSRQDAIYQNLTQFKAAVGELSEKSKLQEIYQELTQLKAAVGELPEKSKQQEIYQELSQLKAAVGELPEKSKQQEIYQELSQLKAAVGELPEKSKQQEIYQELTRLKAAVGELPEKSKQQEIYQELSQLKAAVGELPEKSKQQEIYQELSQLKAAVGELPEKSKQQEIYQELTQLKAAVGELPEKSKQQEIYQELTQLKAAVERLCRRCPWEWTFFQGNCYFMSNSQRNWHDSITACQEVGAQLVVIKSAEEQNFLQLQSSRSNRFTWMGLSDLNHEGTWQWVDGSPLLPSFKQYWNRGEPNNVGEEDCAEFSGNGWNDDKCNLAKFWICKKSAASCSRDEEQFLSPASATPNPPPE</sequence>
<gene>
    <name type="primary">CD209</name>
</gene>
<feature type="chain" id="PRO_0000046594" description="CD209 antigen">
    <location>
        <begin position="1"/>
        <end position="427"/>
    </location>
</feature>
<feature type="topological domain" description="Cytoplasmic" evidence="3">
    <location>
        <begin position="1"/>
        <end position="37"/>
    </location>
</feature>
<feature type="transmembrane region" description="Helical; Signal-anchor for type II membrane protein" evidence="3">
    <location>
        <begin position="38"/>
        <end position="58"/>
    </location>
</feature>
<feature type="topological domain" description="Extracellular" evidence="3">
    <location>
        <begin position="59"/>
        <end position="427"/>
    </location>
</feature>
<feature type="repeat" description="1">
    <location>
        <begin position="96"/>
        <end position="118"/>
    </location>
</feature>
<feature type="repeat" description="2">
    <location>
        <begin position="119"/>
        <end position="141"/>
    </location>
</feature>
<feature type="repeat" description="3">
    <location>
        <begin position="142"/>
        <end position="164"/>
    </location>
</feature>
<feature type="repeat" description="4">
    <location>
        <begin position="165"/>
        <end position="187"/>
    </location>
</feature>
<feature type="repeat" description="5">
    <location>
        <begin position="188"/>
        <end position="210"/>
    </location>
</feature>
<feature type="repeat" description="6">
    <location>
        <begin position="211"/>
        <end position="233"/>
    </location>
</feature>
<feature type="repeat" description="7">
    <location>
        <begin position="234"/>
        <end position="256"/>
    </location>
</feature>
<feature type="repeat" description="8">
    <location>
        <begin position="257"/>
        <end position="280"/>
    </location>
</feature>
<feature type="domain" description="C-type lectin" evidence="4">
    <location>
        <begin position="286"/>
        <end position="401"/>
    </location>
</feature>
<feature type="region of interest" description="8 X approximate tandem repeats">
    <location>
        <begin position="96"/>
        <end position="280"/>
    </location>
</feature>
<feature type="short sequence motif" description="Endocytosis signal" evidence="1">
    <location>
        <begin position="14"/>
        <end position="15"/>
    </location>
</feature>
<feature type="short sequence motif" description="Endocytosis signal" evidence="3">
    <location>
        <begin position="16"/>
        <end position="18"/>
    </location>
</feature>
<feature type="short sequence motif" description="Endocytosis signal" evidence="3">
    <location>
        <begin position="31"/>
        <end position="34"/>
    </location>
</feature>
<feature type="binding site" evidence="1">
    <location>
        <position position="370"/>
    </location>
    <ligand>
        <name>Ca(2+)</name>
        <dbReference type="ChEBI" id="CHEBI:29108"/>
    </ligand>
</feature>
<feature type="binding site" evidence="1">
    <location>
        <position position="372"/>
    </location>
    <ligand>
        <name>Ca(2+)</name>
        <dbReference type="ChEBI" id="CHEBI:29108"/>
    </ligand>
</feature>
<feature type="binding site" evidence="1">
    <location>
        <position position="374"/>
    </location>
    <ligand>
        <name>Ca(2+)</name>
        <dbReference type="ChEBI" id="CHEBI:29108"/>
    </ligand>
</feature>
<feature type="binding site" evidence="1">
    <location>
        <position position="377"/>
    </location>
    <ligand>
        <name>Ca(2+)</name>
        <dbReference type="ChEBI" id="CHEBI:29108"/>
    </ligand>
</feature>
<feature type="binding site" evidence="1">
    <location>
        <position position="388"/>
    </location>
    <ligand>
        <name>Ca(2+)</name>
        <dbReference type="ChEBI" id="CHEBI:29108"/>
    </ligand>
</feature>
<feature type="binding site" evidence="1">
    <location>
        <position position="389"/>
    </location>
    <ligand>
        <name>Ca(2+)</name>
        <dbReference type="ChEBI" id="CHEBI:29108"/>
    </ligand>
</feature>
<feature type="glycosylation site" description="N-linked (GlcNAc...) asparagine" evidence="3">
    <location>
        <position position="80"/>
    </location>
</feature>
<feature type="disulfide bond" evidence="4">
    <location>
        <begin position="279"/>
        <end position="290"/>
    </location>
</feature>
<feature type="disulfide bond" evidence="4">
    <location>
        <begin position="307"/>
        <end position="400"/>
    </location>
</feature>
<feature type="disulfide bond" evidence="4">
    <location>
        <begin position="379"/>
        <end position="392"/>
    </location>
</feature>
<accession>Q8HXZ8</accession>
<comment type="function">
    <text evidence="1">Pathogen-recognition receptor expressed on the surface of immature dendritic cells (DCs) and involved in initiation of primary immune response. Thought to mediate the endocytosis of pathogens which are subsequently degraded in lysosomal compartments. The receptor returns to the cell membrane surface and the pathogen-derived antigens are presented to resting T-cells via MHC class II proteins to initiate the adaptive immune response. Probably recognizes in a calcium-dependent manner high mannose N-linked oligosaccharides in a variety of pathogen antigens (By similarity).</text>
</comment>
<comment type="function">
    <text evidence="1">On DCs it is a high affinity receptor for ICAM2 and ICAM3 by binding to mannose-like carbohydrates. May act as a DC rolling receptor that mediates transendothelial migration of DC presursors from blood to tissues by binding endothelial ICAM2. Seems to regulate DC-induced T-cell proliferation by binding to ICAM3 on T-cells in the immunological synapse formed between DC and T-cells (By similarity).</text>
</comment>
<comment type="subunit">
    <text evidence="2">Homotetramer. Interacts with C1QBP; the interaction is indicative for a C1q:C1QBP:CD209 signaling complex. Interacts with ICAM2 and ICAM3 by binding to mannose-like carbohydrates. Interacts (via C-type lectin domain) with CEACAM1 (via Lewis X moieties); this interaction is regulated by the glycosylation pattern of CEACAM1 on cell types and regulates contact between dendritic cells and neutrophils.</text>
</comment>
<comment type="subcellular location">
    <subcellularLocation>
        <location evidence="1">Membrane</location>
        <topology evidence="1">Single-pass type II membrane protein</topology>
    </subcellularLocation>
</comment>
<comment type="domain">
    <text evidence="1">The tandem repeat domain, also called neck domain, mediates oligomerization.</text>
</comment>
<proteinExistence type="inferred from homology"/>
<reference key="1">
    <citation type="journal article" date="2003" name="J. Virol.">
        <title>Novel member of the CD209 (DC-SIGN) gene family in primates.</title>
        <authorList>
            <person name="Bashirova A.A."/>
            <person name="Wu L."/>
            <person name="Cheng J."/>
            <person name="Martin T.D."/>
            <person name="Martin M.P."/>
            <person name="Benveniste R.E."/>
            <person name="Lifson J.D."/>
            <person name="Kewalramani V.N."/>
            <person name="Hughes A."/>
            <person name="Carrington M."/>
        </authorList>
    </citation>
    <scope>NUCLEOTIDE SEQUENCE [GENOMIC DNA]</scope>
    <source>
        <strain>Isolate Ggo3</strain>
    </source>
</reference>
<organism>
    <name type="scientific">Gorilla gorilla gorilla</name>
    <name type="common">Western lowland gorilla</name>
    <dbReference type="NCBI Taxonomy" id="9595"/>
    <lineage>
        <taxon>Eukaryota</taxon>
        <taxon>Metazoa</taxon>
        <taxon>Chordata</taxon>
        <taxon>Craniata</taxon>
        <taxon>Vertebrata</taxon>
        <taxon>Euteleostomi</taxon>
        <taxon>Mammalia</taxon>
        <taxon>Eutheria</taxon>
        <taxon>Euarchontoglires</taxon>
        <taxon>Primates</taxon>
        <taxon>Haplorrhini</taxon>
        <taxon>Catarrhini</taxon>
        <taxon>Hominidae</taxon>
        <taxon>Gorilla</taxon>
    </lineage>
</organism>